<feature type="chain" id="PRO_0000124558" description="Autophagy-related protein 17">
    <location>
        <begin position="1"/>
        <end position="409"/>
    </location>
</feature>
<sequence length="409" mass="47978">MPESLAERARSTLLKAQVLCREVESRIAEVKDRLSQWEKNRHTLRFLVSCLEHQLGFLEQCALRQGIGRALIETEWSQVVLVDLVNEMKLWYDKIQLRLERLDQVENILVADNKHLSHYISQEQALVLKKRLDEVPIIRPQIENIQTQYDTMCKRVRQKLINKRLTEIKTIFDSQFGDELTETAELTEVKPRDLDSIELELVDYINSLTDHFDKCQALEKGLFNDSNEYDELLKIVSADDSQLDDIMKHLLNTIDSTNHQIDKVYEILDIKTKQKTILHGKINELIANCTKYSEYLAIFKGIATSIEKFKEGCMQDIQLTKELYKFYDEFENSYNKLLQEVQRRRALSQKMLGIIKNCENELKTLHDEDQKLRTHFLSENGAFLPETIWPGEIDDLSPLYALDYHIKEI</sequence>
<protein>
    <recommendedName>
        <fullName>Autophagy-related protein 17</fullName>
    </recommendedName>
</protein>
<gene>
    <name type="primary">ATG17</name>
    <name type="ordered locus">CAGL0J04686g</name>
</gene>
<keyword id="KW-0072">Autophagy</keyword>
<keyword id="KW-0963">Cytoplasm</keyword>
<keyword id="KW-0472">Membrane</keyword>
<keyword id="KW-1185">Reference proteome</keyword>
<organism>
    <name type="scientific">Candida glabrata (strain ATCC 2001 / BCRC 20586 / JCM 3761 / NBRC 0622 / NRRL Y-65 / CBS 138)</name>
    <name type="common">Yeast</name>
    <name type="synonym">Nakaseomyces glabratus</name>
    <dbReference type="NCBI Taxonomy" id="284593"/>
    <lineage>
        <taxon>Eukaryota</taxon>
        <taxon>Fungi</taxon>
        <taxon>Dikarya</taxon>
        <taxon>Ascomycota</taxon>
        <taxon>Saccharomycotina</taxon>
        <taxon>Saccharomycetes</taxon>
        <taxon>Saccharomycetales</taxon>
        <taxon>Saccharomycetaceae</taxon>
        <taxon>Nakaseomyces</taxon>
    </lineage>
</organism>
<evidence type="ECO:0000250" key="1"/>
<evidence type="ECO:0000305" key="2"/>
<name>ATG17_CANGA</name>
<dbReference type="EMBL" id="CR380956">
    <property type="protein sequence ID" value="CAG60859.1"/>
    <property type="molecule type" value="Genomic_DNA"/>
</dbReference>
<dbReference type="RefSeq" id="XP_447910.1">
    <property type="nucleotide sequence ID" value="XM_447910.1"/>
</dbReference>
<dbReference type="SMR" id="Q6FPD4"/>
<dbReference type="FunCoup" id="Q6FPD4">
    <property type="interactions" value="182"/>
</dbReference>
<dbReference type="STRING" id="284593.Q6FPD4"/>
<dbReference type="EnsemblFungi" id="CAGL0J04686g-T">
    <property type="protein sequence ID" value="CAGL0J04686g-T-p1"/>
    <property type="gene ID" value="CAGL0J04686g"/>
</dbReference>
<dbReference type="GeneID" id="2889451"/>
<dbReference type="KEGG" id="cgr:2889451"/>
<dbReference type="CGD" id="CAL0133050">
    <property type="gene designation" value="ATG17"/>
</dbReference>
<dbReference type="VEuPathDB" id="FungiDB:CAGL0J04686g"/>
<dbReference type="eggNOG" id="ENOG502QQDW">
    <property type="taxonomic scope" value="Eukaryota"/>
</dbReference>
<dbReference type="HOGENOM" id="CLU_051526_0_0_1"/>
<dbReference type="InParanoid" id="Q6FPD4"/>
<dbReference type="OMA" id="PENIWPN"/>
<dbReference type="Proteomes" id="UP000002428">
    <property type="component" value="Chromosome J"/>
</dbReference>
<dbReference type="GO" id="GO:1990316">
    <property type="term" value="C:Atg1/ULK1 kinase complex"/>
    <property type="evidence" value="ECO:0007669"/>
    <property type="project" value="EnsemblFungi"/>
</dbReference>
<dbReference type="GO" id="GO:0034045">
    <property type="term" value="C:phagophore assembly site membrane"/>
    <property type="evidence" value="ECO:0007669"/>
    <property type="project" value="UniProtKB-SubCell"/>
</dbReference>
<dbReference type="GO" id="GO:0120095">
    <property type="term" value="C:vacuole-isolation membrane contact site"/>
    <property type="evidence" value="ECO:0007669"/>
    <property type="project" value="EnsemblFungi"/>
</dbReference>
<dbReference type="GO" id="GO:0060090">
    <property type="term" value="F:molecular adaptor activity"/>
    <property type="evidence" value="ECO:0007669"/>
    <property type="project" value="EnsemblFungi"/>
</dbReference>
<dbReference type="GO" id="GO:0030295">
    <property type="term" value="F:protein kinase activator activity"/>
    <property type="evidence" value="ECO:0007669"/>
    <property type="project" value="EnsemblFungi"/>
</dbReference>
<dbReference type="GO" id="GO:0000149">
    <property type="term" value="F:SNARE binding"/>
    <property type="evidence" value="ECO:0007669"/>
    <property type="project" value="EnsemblFungi"/>
</dbReference>
<dbReference type="GO" id="GO:0000422">
    <property type="term" value="P:autophagy of mitochondrion"/>
    <property type="evidence" value="ECO:0007669"/>
    <property type="project" value="EnsemblFungi"/>
</dbReference>
<dbReference type="GO" id="GO:0006995">
    <property type="term" value="P:cellular response to nitrogen starvation"/>
    <property type="evidence" value="ECO:0007669"/>
    <property type="project" value="EnsemblFungi"/>
</dbReference>
<dbReference type="GO" id="GO:0000425">
    <property type="term" value="P:pexophagy"/>
    <property type="evidence" value="ECO:0007669"/>
    <property type="project" value="EnsemblFungi"/>
</dbReference>
<dbReference type="GO" id="GO:0034727">
    <property type="term" value="P:piecemeal microautophagy of the nucleus"/>
    <property type="evidence" value="ECO:0007669"/>
    <property type="project" value="EnsemblFungi"/>
</dbReference>
<dbReference type="GO" id="GO:2000786">
    <property type="term" value="P:positive regulation of autophagosome assembly"/>
    <property type="evidence" value="ECO:0007669"/>
    <property type="project" value="EnsemblFungi"/>
</dbReference>
<dbReference type="GO" id="GO:0045772">
    <property type="term" value="P:positive regulation of autophagosome size"/>
    <property type="evidence" value="ECO:0007669"/>
    <property type="project" value="EnsemblFungi"/>
</dbReference>
<dbReference type="GO" id="GO:0034497">
    <property type="term" value="P:protein localization to phagophore assembly site"/>
    <property type="evidence" value="ECO:0007669"/>
    <property type="project" value="EnsemblFungi"/>
</dbReference>
<dbReference type="InterPro" id="IPR007240">
    <property type="entry name" value="Atg17"/>
</dbReference>
<dbReference type="InterPro" id="IPR045326">
    <property type="entry name" value="ATG17-like_dom"/>
</dbReference>
<dbReference type="PANTHER" id="PTHR28005">
    <property type="entry name" value="AUTOPHAGY-RELATED PROTEIN 17"/>
    <property type="match status" value="1"/>
</dbReference>
<dbReference type="PANTHER" id="PTHR28005:SF1">
    <property type="entry name" value="AUTOPHAGY-RELATED PROTEIN 17"/>
    <property type="match status" value="1"/>
</dbReference>
<dbReference type="Pfam" id="PF04108">
    <property type="entry name" value="ATG17_like"/>
    <property type="match status" value="1"/>
</dbReference>
<reference key="1">
    <citation type="journal article" date="2004" name="Nature">
        <title>Genome evolution in yeasts.</title>
        <authorList>
            <person name="Dujon B."/>
            <person name="Sherman D."/>
            <person name="Fischer G."/>
            <person name="Durrens P."/>
            <person name="Casaregola S."/>
            <person name="Lafontaine I."/>
            <person name="de Montigny J."/>
            <person name="Marck C."/>
            <person name="Neuveglise C."/>
            <person name="Talla E."/>
            <person name="Goffard N."/>
            <person name="Frangeul L."/>
            <person name="Aigle M."/>
            <person name="Anthouard V."/>
            <person name="Babour A."/>
            <person name="Barbe V."/>
            <person name="Barnay S."/>
            <person name="Blanchin S."/>
            <person name="Beckerich J.-M."/>
            <person name="Beyne E."/>
            <person name="Bleykasten C."/>
            <person name="Boisrame A."/>
            <person name="Boyer J."/>
            <person name="Cattolico L."/>
            <person name="Confanioleri F."/>
            <person name="de Daruvar A."/>
            <person name="Despons L."/>
            <person name="Fabre E."/>
            <person name="Fairhead C."/>
            <person name="Ferry-Dumazet H."/>
            <person name="Groppi A."/>
            <person name="Hantraye F."/>
            <person name="Hennequin C."/>
            <person name="Jauniaux N."/>
            <person name="Joyet P."/>
            <person name="Kachouri R."/>
            <person name="Kerrest A."/>
            <person name="Koszul R."/>
            <person name="Lemaire M."/>
            <person name="Lesur I."/>
            <person name="Ma L."/>
            <person name="Muller H."/>
            <person name="Nicaud J.-M."/>
            <person name="Nikolski M."/>
            <person name="Oztas S."/>
            <person name="Ozier-Kalogeropoulos O."/>
            <person name="Pellenz S."/>
            <person name="Potier S."/>
            <person name="Richard G.-F."/>
            <person name="Straub M.-L."/>
            <person name="Suleau A."/>
            <person name="Swennen D."/>
            <person name="Tekaia F."/>
            <person name="Wesolowski-Louvel M."/>
            <person name="Westhof E."/>
            <person name="Wirth B."/>
            <person name="Zeniou-Meyer M."/>
            <person name="Zivanovic Y."/>
            <person name="Bolotin-Fukuhara M."/>
            <person name="Thierry A."/>
            <person name="Bouchier C."/>
            <person name="Caudron B."/>
            <person name="Scarpelli C."/>
            <person name="Gaillardin C."/>
            <person name="Weissenbach J."/>
            <person name="Wincker P."/>
            <person name="Souciet J.-L."/>
        </authorList>
    </citation>
    <scope>NUCLEOTIDE SEQUENCE [LARGE SCALE GENOMIC DNA]</scope>
    <source>
        <strain>ATCC 2001 / BCRC 20586 / JCM 3761 / NBRC 0622 / NRRL Y-65 / CBS 138</strain>
    </source>
</reference>
<proteinExistence type="inferred from homology"/>
<comment type="function">
    <text evidence="1">Autophagy-specific protein that functions in response to autophagy-inducing signals as a scaffold to recruit other ATG proteins to organize pre-autophagosomal structure (PAS) formation. Modulates the timing and magnitude of the autophagy response, such as the size of the sequestering vesicles. Plays particularly a role in pexophagy and nucleophagy (By similarity).</text>
</comment>
<comment type="subcellular location">
    <subcellularLocation>
        <location evidence="1">Cytoplasm</location>
    </subcellularLocation>
    <subcellularLocation>
        <location evidence="1">Preautophagosomal structure membrane</location>
        <topology evidence="1">Peripheral membrane protein</topology>
    </subcellularLocation>
</comment>
<comment type="similarity">
    <text evidence="2">Belongs to the ATG17 family.</text>
</comment>
<accession>Q6FPD4</accession>